<sequence length="364" mass="41847">MITAEKKKKNKFLPNFDKQSIYSLRFDEMQNWLVEQGQQKFRAKQIFEWLYQKRVDSIDEMTNLSKDLRQLLKDNFTVTTLTTVVKQESKDGTIKFLFELQDGYTIETVLMRHDYGNSVCVTTQVGCRIGCTFCASTLGGLKRNLEAGEIVSQVLTVQKALDATEERVSQIVIMGIGEPFENYDEMMGFLRIVNDDNSLNIGARHITVSTSGIIPRIYDFADEDIQINFAVSLHAAKDEVRSRLMPINRAYNVEKLIEAIQYYQEKTNRRVTFEYGLFGGVNDQLEHARELAHLIKGLNCHVNLIPVNHVPERNYVKTAKNDIFKFEKELKRLGINATIRREQGSDIDAACGQLRAKERQVETR</sequence>
<dbReference type="EC" id="2.1.1.192" evidence="1"/>
<dbReference type="EMBL" id="AJ938182">
    <property type="protein sequence ID" value="CAI80771.1"/>
    <property type="molecule type" value="Genomic_DNA"/>
</dbReference>
<dbReference type="RefSeq" id="WP_000626902.1">
    <property type="nucleotide sequence ID" value="NC_007622.1"/>
</dbReference>
<dbReference type="SMR" id="Q2YXJ8"/>
<dbReference type="KEGG" id="sab:SAB1082"/>
<dbReference type="HOGENOM" id="CLU_029101_0_1_9"/>
<dbReference type="GO" id="GO:0005737">
    <property type="term" value="C:cytoplasm"/>
    <property type="evidence" value="ECO:0007669"/>
    <property type="project" value="UniProtKB-SubCell"/>
</dbReference>
<dbReference type="GO" id="GO:0051539">
    <property type="term" value="F:4 iron, 4 sulfur cluster binding"/>
    <property type="evidence" value="ECO:0007669"/>
    <property type="project" value="UniProtKB-UniRule"/>
</dbReference>
<dbReference type="GO" id="GO:0046872">
    <property type="term" value="F:metal ion binding"/>
    <property type="evidence" value="ECO:0007669"/>
    <property type="project" value="UniProtKB-KW"/>
</dbReference>
<dbReference type="GO" id="GO:0070040">
    <property type="term" value="F:rRNA (adenine(2503)-C2-)-methyltransferase activity"/>
    <property type="evidence" value="ECO:0007669"/>
    <property type="project" value="UniProtKB-UniRule"/>
</dbReference>
<dbReference type="GO" id="GO:0019843">
    <property type="term" value="F:rRNA binding"/>
    <property type="evidence" value="ECO:0007669"/>
    <property type="project" value="UniProtKB-UniRule"/>
</dbReference>
<dbReference type="GO" id="GO:0002935">
    <property type="term" value="F:tRNA (adenine(37)-C2)-methyltransferase activity"/>
    <property type="evidence" value="ECO:0007669"/>
    <property type="project" value="UniProtKB-UniRule"/>
</dbReference>
<dbReference type="GO" id="GO:0000049">
    <property type="term" value="F:tRNA binding"/>
    <property type="evidence" value="ECO:0007669"/>
    <property type="project" value="UniProtKB-UniRule"/>
</dbReference>
<dbReference type="GO" id="GO:0046677">
    <property type="term" value="P:response to antibiotic"/>
    <property type="evidence" value="ECO:0007669"/>
    <property type="project" value="UniProtKB-KW"/>
</dbReference>
<dbReference type="GO" id="GO:0070475">
    <property type="term" value="P:rRNA base methylation"/>
    <property type="evidence" value="ECO:0007669"/>
    <property type="project" value="UniProtKB-UniRule"/>
</dbReference>
<dbReference type="GO" id="GO:0030488">
    <property type="term" value="P:tRNA methylation"/>
    <property type="evidence" value="ECO:0007669"/>
    <property type="project" value="UniProtKB-UniRule"/>
</dbReference>
<dbReference type="CDD" id="cd01335">
    <property type="entry name" value="Radical_SAM"/>
    <property type="match status" value="1"/>
</dbReference>
<dbReference type="FunFam" id="1.10.150.530:FF:000002">
    <property type="entry name" value="Probable dual-specificity RNA methyltransferase RlmN"/>
    <property type="match status" value="1"/>
</dbReference>
<dbReference type="FunFam" id="3.20.20.70:FF:000014">
    <property type="entry name" value="Probable dual-specificity RNA methyltransferase RlmN"/>
    <property type="match status" value="1"/>
</dbReference>
<dbReference type="Gene3D" id="1.10.150.530">
    <property type="match status" value="1"/>
</dbReference>
<dbReference type="Gene3D" id="3.20.20.70">
    <property type="entry name" value="Aldolase class I"/>
    <property type="match status" value="1"/>
</dbReference>
<dbReference type="HAMAP" id="MF_01849">
    <property type="entry name" value="RNA_methyltr_RlmN"/>
    <property type="match status" value="1"/>
</dbReference>
<dbReference type="InterPro" id="IPR013785">
    <property type="entry name" value="Aldolase_TIM"/>
</dbReference>
<dbReference type="InterPro" id="IPR040072">
    <property type="entry name" value="Methyltransferase_A"/>
</dbReference>
<dbReference type="InterPro" id="IPR048641">
    <property type="entry name" value="RlmN_N"/>
</dbReference>
<dbReference type="InterPro" id="IPR027492">
    <property type="entry name" value="RNA_MTrfase_RlmN"/>
</dbReference>
<dbReference type="InterPro" id="IPR004383">
    <property type="entry name" value="rRNA_lsu_MTrfase_RlmN/Cfr"/>
</dbReference>
<dbReference type="InterPro" id="IPR007197">
    <property type="entry name" value="rSAM"/>
</dbReference>
<dbReference type="NCBIfam" id="TIGR00048">
    <property type="entry name" value="rRNA_mod_RlmN"/>
    <property type="match status" value="1"/>
</dbReference>
<dbReference type="PANTHER" id="PTHR30544">
    <property type="entry name" value="23S RRNA METHYLTRANSFERASE"/>
    <property type="match status" value="1"/>
</dbReference>
<dbReference type="PANTHER" id="PTHR30544:SF5">
    <property type="entry name" value="RADICAL SAM CORE DOMAIN-CONTAINING PROTEIN"/>
    <property type="match status" value="1"/>
</dbReference>
<dbReference type="Pfam" id="PF04055">
    <property type="entry name" value="Radical_SAM"/>
    <property type="match status" value="1"/>
</dbReference>
<dbReference type="Pfam" id="PF21016">
    <property type="entry name" value="RlmN_N"/>
    <property type="match status" value="1"/>
</dbReference>
<dbReference type="PIRSF" id="PIRSF006004">
    <property type="entry name" value="CHP00048"/>
    <property type="match status" value="1"/>
</dbReference>
<dbReference type="SFLD" id="SFLDF00275">
    <property type="entry name" value="adenosine_C2_methyltransferase"/>
    <property type="match status" value="1"/>
</dbReference>
<dbReference type="SFLD" id="SFLDG01062">
    <property type="entry name" value="methyltransferase_(Class_A)"/>
    <property type="match status" value="1"/>
</dbReference>
<dbReference type="SUPFAM" id="SSF102114">
    <property type="entry name" value="Radical SAM enzymes"/>
    <property type="match status" value="1"/>
</dbReference>
<dbReference type="PROSITE" id="PS51918">
    <property type="entry name" value="RADICAL_SAM"/>
    <property type="match status" value="1"/>
</dbReference>
<reference key="1">
    <citation type="journal article" date="2007" name="PLoS ONE">
        <title>Molecular correlates of host specialization in Staphylococcus aureus.</title>
        <authorList>
            <person name="Herron-Olson L."/>
            <person name="Fitzgerald J.R."/>
            <person name="Musser J.M."/>
            <person name="Kapur V."/>
        </authorList>
    </citation>
    <scope>NUCLEOTIDE SEQUENCE [LARGE SCALE GENOMIC DNA]</scope>
    <source>
        <strain>bovine RF122 / ET3-1</strain>
    </source>
</reference>
<comment type="function">
    <text evidence="1">Specifically methylates position 2 of adenine 2503 in 23S rRNA and position 2 of adenine 37 in tRNAs. Confers resistance to some classes of antibiotics.</text>
</comment>
<comment type="catalytic activity">
    <reaction evidence="1">
        <text>adenosine(2503) in 23S rRNA + 2 reduced [2Fe-2S]-[ferredoxin] + 2 S-adenosyl-L-methionine = 2-methyladenosine(2503) in 23S rRNA + 5'-deoxyadenosine + L-methionine + 2 oxidized [2Fe-2S]-[ferredoxin] + S-adenosyl-L-homocysteine</text>
        <dbReference type="Rhea" id="RHEA:42916"/>
        <dbReference type="Rhea" id="RHEA-COMP:10000"/>
        <dbReference type="Rhea" id="RHEA-COMP:10001"/>
        <dbReference type="Rhea" id="RHEA-COMP:10152"/>
        <dbReference type="Rhea" id="RHEA-COMP:10282"/>
        <dbReference type="ChEBI" id="CHEBI:17319"/>
        <dbReference type="ChEBI" id="CHEBI:33737"/>
        <dbReference type="ChEBI" id="CHEBI:33738"/>
        <dbReference type="ChEBI" id="CHEBI:57844"/>
        <dbReference type="ChEBI" id="CHEBI:57856"/>
        <dbReference type="ChEBI" id="CHEBI:59789"/>
        <dbReference type="ChEBI" id="CHEBI:74411"/>
        <dbReference type="ChEBI" id="CHEBI:74497"/>
        <dbReference type="EC" id="2.1.1.192"/>
    </reaction>
</comment>
<comment type="catalytic activity">
    <reaction evidence="1">
        <text>adenosine(37) in tRNA + 2 reduced [2Fe-2S]-[ferredoxin] + 2 S-adenosyl-L-methionine = 2-methyladenosine(37) in tRNA + 5'-deoxyadenosine + L-methionine + 2 oxidized [2Fe-2S]-[ferredoxin] + S-adenosyl-L-homocysteine</text>
        <dbReference type="Rhea" id="RHEA:43332"/>
        <dbReference type="Rhea" id="RHEA-COMP:10000"/>
        <dbReference type="Rhea" id="RHEA-COMP:10001"/>
        <dbReference type="Rhea" id="RHEA-COMP:10162"/>
        <dbReference type="Rhea" id="RHEA-COMP:10485"/>
        <dbReference type="ChEBI" id="CHEBI:17319"/>
        <dbReference type="ChEBI" id="CHEBI:33737"/>
        <dbReference type="ChEBI" id="CHEBI:33738"/>
        <dbReference type="ChEBI" id="CHEBI:57844"/>
        <dbReference type="ChEBI" id="CHEBI:57856"/>
        <dbReference type="ChEBI" id="CHEBI:59789"/>
        <dbReference type="ChEBI" id="CHEBI:74411"/>
        <dbReference type="ChEBI" id="CHEBI:74497"/>
        <dbReference type="EC" id="2.1.1.192"/>
    </reaction>
</comment>
<comment type="cofactor">
    <cofactor evidence="1">
        <name>[4Fe-4S] cluster</name>
        <dbReference type="ChEBI" id="CHEBI:49883"/>
    </cofactor>
    <text evidence="1">Binds 1 [4Fe-4S] cluster. The cluster is coordinated with 3 cysteines and an exchangeable S-adenosyl-L-methionine.</text>
</comment>
<comment type="subcellular location">
    <subcellularLocation>
        <location evidence="1">Cytoplasm</location>
    </subcellularLocation>
</comment>
<comment type="miscellaneous">
    <text evidence="1">Reaction proceeds by a ping-pong mechanism involving intermediate methylation of a conserved cysteine residue.</text>
</comment>
<comment type="similarity">
    <text evidence="1">Belongs to the radical SAM superfamily. RlmN family.</text>
</comment>
<gene>
    <name evidence="1" type="primary">rlmN</name>
    <name type="ordered locus">SAB1082</name>
</gene>
<protein>
    <recommendedName>
        <fullName evidence="1">Probable dual-specificity RNA methyltransferase RlmN</fullName>
        <ecNumber evidence="1">2.1.1.192</ecNumber>
    </recommendedName>
    <alternativeName>
        <fullName evidence="1">23S rRNA (adenine(2503)-C(2))-methyltransferase</fullName>
    </alternativeName>
    <alternativeName>
        <fullName evidence="1">23S rRNA m2A2503 methyltransferase</fullName>
    </alternativeName>
    <alternativeName>
        <fullName evidence="1">Ribosomal RNA large subunit methyltransferase N</fullName>
    </alternativeName>
    <alternativeName>
        <fullName evidence="1">tRNA (adenine(37)-C(2))-methyltransferase</fullName>
    </alternativeName>
    <alternativeName>
        <fullName evidence="1">tRNA m2A37 methyltransferase</fullName>
    </alternativeName>
</protein>
<name>RLMN_STAAB</name>
<keyword id="KW-0004">4Fe-4S</keyword>
<keyword id="KW-0046">Antibiotic resistance</keyword>
<keyword id="KW-0963">Cytoplasm</keyword>
<keyword id="KW-1015">Disulfide bond</keyword>
<keyword id="KW-0408">Iron</keyword>
<keyword id="KW-0411">Iron-sulfur</keyword>
<keyword id="KW-0479">Metal-binding</keyword>
<keyword id="KW-0489">Methyltransferase</keyword>
<keyword id="KW-0698">rRNA processing</keyword>
<keyword id="KW-0949">S-adenosyl-L-methionine</keyword>
<keyword id="KW-0808">Transferase</keyword>
<keyword id="KW-0819">tRNA processing</keyword>
<feature type="chain" id="PRO_0000350427" description="Probable dual-specificity RNA methyltransferase RlmN">
    <location>
        <begin position="1"/>
        <end position="364"/>
    </location>
</feature>
<feature type="domain" description="Radical SAM core" evidence="2">
    <location>
        <begin position="113"/>
        <end position="346"/>
    </location>
</feature>
<feature type="active site" description="Proton acceptor" evidence="1">
    <location>
        <position position="107"/>
    </location>
</feature>
<feature type="active site" description="S-methylcysteine intermediate" evidence="1">
    <location>
        <position position="351"/>
    </location>
</feature>
<feature type="binding site" evidence="1">
    <location>
        <position position="127"/>
    </location>
    <ligand>
        <name>[4Fe-4S] cluster</name>
        <dbReference type="ChEBI" id="CHEBI:49883"/>
        <note>4Fe-4S-S-AdoMet</note>
    </ligand>
</feature>
<feature type="binding site" evidence="1">
    <location>
        <position position="131"/>
    </location>
    <ligand>
        <name>[4Fe-4S] cluster</name>
        <dbReference type="ChEBI" id="CHEBI:49883"/>
        <note>4Fe-4S-S-AdoMet</note>
    </ligand>
</feature>
<feature type="binding site" evidence="1">
    <location>
        <position position="134"/>
    </location>
    <ligand>
        <name>[4Fe-4S] cluster</name>
        <dbReference type="ChEBI" id="CHEBI:49883"/>
        <note>4Fe-4S-S-AdoMet</note>
    </ligand>
</feature>
<feature type="binding site" evidence="1">
    <location>
        <begin position="177"/>
        <end position="178"/>
    </location>
    <ligand>
        <name>S-adenosyl-L-methionine</name>
        <dbReference type="ChEBI" id="CHEBI:59789"/>
    </ligand>
</feature>
<feature type="binding site" evidence="1">
    <location>
        <position position="209"/>
    </location>
    <ligand>
        <name>S-adenosyl-L-methionine</name>
        <dbReference type="ChEBI" id="CHEBI:59789"/>
    </ligand>
</feature>
<feature type="binding site" evidence="1">
    <location>
        <begin position="232"/>
        <end position="234"/>
    </location>
    <ligand>
        <name>S-adenosyl-L-methionine</name>
        <dbReference type="ChEBI" id="CHEBI:59789"/>
    </ligand>
</feature>
<feature type="binding site" evidence="1">
    <location>
        <position position="308"/>
    </location>
    <ligand>
        <name>S-adenosyl-L-methionine</name>
        <dbReference type="ChEBI" id="CHEBI:59789"/>
    </ligand>
</feature>
<feature type="disulfide bond" description="(transient)" evidence="1">
    <location>
        <begin position="120"/>
        <end position="351"/>
    </location>
</feature>
<proteinExistence type="inferred from homology"/>
<organism>
    <name type="scientific">Staphylococcus aureus (strain bovine RF122 / ET3-1)</name>
    <dbReference type="NCBI Taxonomy" id="273036"/>
    <lineage>
        <taxon>Bacteria</taxon>
        <taxon>Bacillati</taxon>
        <taxon>Bacillota</taxon>
        <taxon>Bacilli</taxon>
        <taxon>Bacillales</taxon>
        <taxon>Staphylococcaceae</taxon>
        <taxon>Staphylococcus</taxon>
    </lineage>
</organism>
<evidence type="ECO:0000255" key="1">
    <source>
        <dbReference type="HAMAP-Rule" id="MF_01849"/>
    </source>
</evidence>
<evidence type="ECO:0000255" key="2">
    <source>
        <dbReference type="PROSITE-ProRule" id="PRU01266"/>
    </source>
</evidence>
<accession>Q2YXJ8</accession>